<gene>
    <name evidence="1" type="primary">sufS</name>
    <name type="ordered locus">Ent638_1764</name>
</gene>
<organism>
    <name type="scientific">Enterobacter sp. (strain 638)</name>
    <dbReference type="NCBI Taxonomy" id="399742"/>
    <lineage>
        <taxon>Bacteria</taxon>
        <taxon>Pseudomonadati</taxon>
        <taxon>Pseudomonadota</taxon>
        <taxon>Gammaproteobacteria</taxon>
        <taxon>Enterobacterales</taxon>
        <taxon>Enterobacteriaceae</taxon>
        <taxon>Enterobacter</taxon>
    </lineage>
</organism>
<accession>A4W9R3</accession>
<sequence>MSFPVEKVRADFPVLTREVNGLPLAYLDSAASAQKPNQVIDAEMEFYRHGYAAVHRGIHTLSAEATQRMENVRTQVAAFLNARSAEELVFVRGTTEGINLVANSWGNAQVHAGDNIVITQMEHHANIVPWQMLCERSGAQLRVIPLNVDGTLQLEQLDALLDARTRLVAITQISNVLGTANPVAEIIAKAHQAGAKVLVDGAQAVMHHTIDVQALDCDFYVFSGHKLYGPTGIGVLYVKEDILQAMPPWEGGGSMIATVSLTQGTTYAKAPWRFEAGTPNTGGIIGLGAAIDYVSTLGLDAIAEYEASLMRYALAEMASVPDLTLYGPDARKGVIAFNLGKHHAYDVGSFLDNYGVAVRTGHHCAMPLMAFYQVPAMCRASLVMYNTTEEVDRLVTGLKRIHHLLG</sequence>
<evidence type="ECO:0000255" key="1">
    <source>
        <dbReference type="HAMAP-Rule" id="MF_01831"/>
    </source>
</evidence>
<name>SUFS_ENT38</name>
<reference key="1">
    <citation type="journal article" date="2010" name="PLoS Genet.">
        <title>Genome sequence of the plant growth promoting endophytic bacterium Enterobacter sp. 638.</title>
        <authorList>
            <person name="Taghavi S."/>
            <person name="van der Lelie D."/>
            <person name="Hoffman A."/>
            <person name="Zhang Y.B."/>
            <person name="Walla M.D."/>
            <person name="Vangronsveld J."/>
            <person name="Newman L."/>
            <person name="Monchy S."/>
        </authorList>
    </citation>
    <scope>NUCLEOTIDE SEQUENCE [LARGE SCALE GENOMIC DNA]</scope>
    <source>
        <strain>638</strain>
    </source>
</reference>
<feature type="chain" id="PRO_1000070425" description="Cysteine desulfurase">
    <location>
        <begin position="1"/>
        <end position="406"/>
    </location>
</feature>
<feature type="active site" description="Cysteine persulfide intermediate" evidence="1">
    <location>
        <position position="364"/>
    </location>
</feature>
<feature type="modified residue" description="N6-(pyridoxal phosphate)lysine" evidence="1">
    <location>
        <position position="226"/>
    </location>
</feature>
<protein>
    <recommendedName>
        <fullName evidence="1">Cysteine desulfurase</fullName>
        <ecNumber evidence="1">2.8.1.7</ecNumber>
    </recommendedName>
    <alternativeName>
        <fullName evidence="1">Selenocysteine beta-lyase</fullName>
        <shortName evidence="1">SCL</shortName>
    </alternativeName>
    <alternativeName>
        <fullName evidence="1">Selenocysteine lyase</fullName>
        <ecNumber evidence="1">4.4.1.16</ecNumber>
    </alternativeName>
    <alternativeName>
        <fullName evidence="1">Selenocysteine reductase</fullName>
    </alternativeName>
</protein>
<keyword id="KW-0963">Cytoplasm</keyword>
<keyword id="KW-0456">Lyase</keyword>
<keyword id="KW-0663">Pyridoxal phosphate</keyword>
<keyword id="KW-0808">Transferase</keyword>
<dbReference type="EC" id="2.8.1.7" evidence="1"/>
<dbReference type="EC" id="4.4.1.16" evidence="1"/>
<dbReference type="EMBL" id="CP000653">
    <property type="protein sequence ID" value="ABP60443.1"/>
    <property type="molecule type" value="Genomic_DNA"/>
</dbReference>
<dbReference type="RefSeq" id="WP_012017158.1">
    <property type="nucleotide sequence ID" value="NC_009436.1"/>
</dbReference>
<dbReference type="SMR" id="A4W9R3"/>
<dbReference type="STRING" id="399742.Ent638_1764"/>
<dbReference type="KEGG" id="ent:Ent638_1764"/>
<dbReference type="eggNOG" id="COG0520">
    <property type="taxonomic scope" value="Bacteria"/>
</dbReference>
<dbReference type="HOGENOM" id="CLU_003433_2_5_6"/>
<dbReference type="OrthoDB" id="9808002at2"/>
<dbReference type="UniPathway" id="UPA00266"/>
<dbReference type="Proteomes" id="UP000000230">
    <property type="component" value="Chromosome"/>
</dbReference>
<dbReference type="GO" id="GO:0005737">
    <property type="term" value="C:cytoplasm"/>
    <property type="evidence" value="ECO:0007669"/>
    <property type="project" value="UniProtKB-SubCell"/>
</dbReference>
<dbReference type="GO" id="GO:0031071">
    <property type="term" value="F:cysteine desulfurase activity"/>
    <property type="evidence" value="ECO:0007669"/>
    <property type="project" value="UniProtKB-UniRule"/>
</dbReference>
<dbReference type="GO" id="GO:0030170">
    <property type="term" value="F:pyridoxal phosphate binding"/>
    <property type="evidence" value="ECO:0007669"/>
    <property type="project" value="InterPro"/>
</dbReference>
<dbReference type="GO" id="GO:0009000">
    <property type="term" value="F:selenocysteine lyase activity"/>
    <property type="evidence" value="ECO:0007669"/>
    <property type="project" value="UniProtKB-UniRule"/>
</dbReference>
<dbReference type="GO" id="GO:0006534">
    <property type="term" value="P:cysteine metabolic process"/>
    <property type="evidence" value="ECO:0007669"/>
    <property type="project" value="InterPro"/>
</dbReference>
<dbReference type="CDD" id="cd06453">
    <property type="entry name" value="SufS_like"/>
    <property type="match status" value="1"/>
</dbReference>
<dbReference type="FunFam" id="3.40.640.10:FF:000042">
    <property type="entry name" value="Cysteine desulfurase"/>
    <property type="match status" value="1"/>
</dbReference>
<dbReference type="Gene3D" id="3.90.1150.10">
    <property type="entry name" value="Aspartate Aminotransferase, domain 1"/>
    <property type="match status" value="1"/>
</dbReference>
<dbReference type="Gene3D" id="3.40.640.10">
    <property type="entry name" value="Type I PLP-dependent aspartate aminotransferase-like (Major domain)"/>
    <property type="match status" value="1"/>
</dbReference>
<dbReference type="HAMAP" id="MF_01831">
    <property type="entry name" value="SufS_aminotrans_5"/>
    <property type="match status" value="1"/>
</dbReference>
<dbReference type="InterPro" id="IPR000192">
    <property type="entry name" value="Aminotrans_V_dom"/>
</dbReference>
<dbReference type="InterPro" id="IPR020578">
    <property type="entry name" value="Aminotrans_V_PyrdxlP_BS"/>
</dbReference>
<dbReference type="InterPro" id="IPR010970">
    <property type="entry name" value="Cys_dSase_SufS"/>
</dbReference>
<dbReference type="InterPro" id="IPR015424">
    <property type="entry name" value="PyrdxlP-dep_Trfase"/>
</dbReference>
<dbReference type="InterPro" id="IPR015421">
    <property type="entry name" value="PyrdxlP-dep_Trfase_major"/>
</dbReference>
<dbReference type="InterPro" id="IPR015422">
    <property type="entry name" value="PyrdxlP-dep_Trfase_small"/>
</dbReference>
<dbReference type="NCBIfam" id="NF006791">
    <property type="entry name" value="PRK09295.1"/>
    <property type="match status" value="1"/>
</dbReference>
<dbReference type="NCBIfam" id="TIGR01979">
    <property type="entry name" value="sufS"/>
    <property type="match status" value="1"/>
</dbReference>
<dbReference type="PANTHER" id="PTHR43586">
    <property type="entry name" value="CYSTEINE DESULFURASE"/>
    <property type="match status" value="1"/>
</dbReference>
<dbReference type="PANTHER" id="PTHR43586:SF25">
    <property type="entry name" value="CYSTEINE DESULFURASE"/>
    <property type="match status" value="1"/>
</dbReference>
<dbReference type="Pfam" id="PF00266">
    <property type="entry name" value="Aminotran_5"/>
    <property type="match status" value="1"/>
</dbReference>
<dbReference type="SUPFAM" id="SSF53383">
    <property type="entry name" value="PLP-dependent transferases"/>
    <property type="match status" value="1"/>
</dbReference>
<dbReference type="PROSITE" id="PS00595">
    <property type="entry name" value="AA_TRANSFER_CLASS_5"/>
    <property type="match status" value="1"/>
</dbReference>
<comment type="function">
    <text evidence="1">Cysteine desulfurases mobilize the sulfur from L-cysteine to yield L-alanine, an essential step in sulfur metabolism for biosynthesis of a variety of sulfur-containing biomolecules. Component of the suf operon, which is activated and required under specific conditions such as oxidative stress and iron limitation. Acts as a potent selenocysteine lyase in vitro, that mobilizes selenium from L-selenocysteine. Selenocysteine lyase activity is however unsure in vivo.</text>
</comment>
<comment type="catalytic activity">
    <reaction evidence="1">
        <text>(sulfur carrier)-H + L-cysteine = (sulfur carrier)-SH + L-alanine</text>
        <dbReference type="Rhea" id="RHEA:43892"/>
        <dbReference type="Rhea" id="RHEA-COMP:14737"/>
        <dbReference type="Rhea" id="RHEA-COMP:14739"/>
        <dbReference type="ChEBI" id="CHEBI:29917"/>
        <dbReference type="ChEBI" id="CHEBI:35235"/>
        <dbReference type="ChEBI" id="CHEBI:57972"/>
        <dbReference type="ChEBI" id="CHEBI:64428"/>
        <dbReference type="EC" id="2.8.1.7"/>
    </reaction>
</comment>
<comment type="catalytic activity">
    <reaction evidence="1">
        <text>L-selenocysteine + AH2 = hydrogenselenide + L-alanine + A + H(+)</text>
        <dbReference type="Rhea" id="RHEA:11632"/>
        <dbReference type="ChEBI" id="CHEBI:13193"/>
        <dbReference type="ChEBI" id="CHEBI:15378"/>
        <dbReference type="ChEBI" id="CHEBI:17499"/>
        <dbReference type="ChEBI" id="CHEBI:29317"/>
        <dbReference type="ChEBI" id="CHEBI:57843"/>
        <dbReference type="ChEBI" id="CHEBI:57972"/>
        <dbReference type="EC" id="4.4.1.16"/>
    </reaction>
</comment>
<comment type="cofactor">
    <cofactor evidence="1">
        <name>pyridoxal 5'-phosphate</name>
        <dbReference type="ChEBI" id="CHEBI:597326"/>
    </cofactor>
</comment>
<comment type="pathway">
    <text evidence="1">Cofactor biosynthesis; iron-sulfur cluster biosynthesis.</text>
</comment>
<comment type="subunit">
    <text evidence="1">Homodimer. Interacts with SufE and the SufBCD complex composed of SufB, SufC and SufD. The interaction with SufE is required to mediate the direct transfer of the sulfur atom from the S-sulfanylcysteine.</text>
</comment>
<comment type="subcellular location">
    <subcellularLocation>
        <location evidence="1">Cytoplasm</location>
    </subcellularLocation>
</comment>
<comment type="similarity">
    <text evidence="1">Belongs to the class-V pyridoxal-phosphate-dependent aminotransferase family. Csd subfamily.</text>
</comment>
<proteinExistence type="inferred from homology"/>